<protein>
    <recommendedName>
        <fullName evidence="1">Arginine--tRNA ligase</fullName>
        <ecNumber evidence="1">6.1.1.19</ecNumber>
    </recommendedName>
    <alternativeName>
        <fullName evidence="1">Arginyl-tRNA synthetase</fullName>
        <shortName evidence="1">ArgRS</shortName>
    </alternativeName>
</protein>
<feature type="chain" id="PRO_0000242078" description="Arginine--tRNA ligase">
    <location>
        <begin position="1"/>
        <end position="565"/>
    </location>
</feature>
<feature type="short sequence motif" description="'HIGH' region">
    <location>
        <begin position="128"/>
        <end position="138"/>
    </location>
</feature>
<comment type="catalytic activity">
    <reaction evidence="1">
        <text>tRNA(Arg) + L-arginine + ATP = L-arginyl-tRNA(Arg) + AMP + diphosphate</text>
        <dbReference type="Rhea" id="RHEA:20301"/>
        <dbReference type="Rhea" id="RHEA-COMP:9658"/>
        <dbReference type="Rhea" id="RHEA-COMP:9673"/>
        <dbReference type="ChEBI" id="CHEBI:30616"/>
        <dbReference type="ChEBI" id="CHEBI:32682"/>
        <dbReference type="ChEBI" id="CHEBI:33019"/>
        <dbReference type="ChEBI" id="CHEBI:78442"/>
        <dbReference type="ChEBI" id="CHEBI:78513"/>
        <dbReference type="ChEBI" id="CHEBI:456215"/>
        <dbReference type="EC" id="6.1.1.19"/>
    </reaction>
</comment>
<comment type="subunit">
    <text evidence="1">Monomer.</text>
</comment>
<comment type="subcellular location">
    <subcellularLocation>
        <location evidence="1">Cytoplasm</location>
    </subcellularLocation>
</comment>
<comment type="similarity">
    <text evidence="1">Belongs to the class-I aminoacyl-tRNA synthetase family.</text>
</comment>
<accession>Q220N0</accession>
<evidence type="ECO:0000255" key="1">
    <source>
        <dbReference type="HAMAP-Rule" id="MF_00123"/>
    </source>
</evidence>
<gene>
    <name evidence="1" type="primary">argS</name>
    <name type="ordered locus">Rfer_0773</name>
</gene>
<dbReference type="EC" id="6.1.1.19" evidence="1"/>
<dbReference type="EMBL" id="CP000267">
    <property type="protein sequence ID" value="ABD68523.1"/>
    <property type="molecule type" value="Genomic_DNA"/>
</dbReference>
<dbReference type="RefSeq" id="WP_011463096.1">
    <property type="nucleotide sequence ID" value="NC_007908.1"/>
</dbReference>
<dbReference type="SMR" id="Q220N0"/>
<dbReference type="STRING" id="338969.Rfer_0773"/>
<dbReference type="KEGG" id="rfr:Rfer_0773"/>
<dbReference type="eggNOG" id="COG0018">
    <property type="taxonomic scope" value="Bacteria"/>
</dbReference>
<dbReference type="HOGENOM" id="CLU_006406_0_1_4"/>
<dbReference type="OrthoDB" id="9803211at2"/>
<dbReference type="Proteomes" id="UP000008332">
    <property type="component" value="Chromosome"/>
</dbReference>
<dbReference type="GO" id="GO:0005737">
    <property type="term" value="C:cytoplasm"/>
    <property type="evidence" value="ECO:0007669"/>
    <property type="project" value="UniProtKB-SubCell"/>
</dbReference>
<dbReference type="GO" id="GO:0004814">
    <property type="term" value="F:arginine-tRNA ligase activity"/>
    <property type="evidence" value="ECO:0007669"/>
    <property type="project" value="UniProtKB-UniRule"/>
</dbReference>
<dbReference type="GO" id="GO:0005524">
    <property type="term" value="F:ATP binding"/>
    <property type="evidence" value="ECO:0007669"/>
    <property type="project" value="UniProtKB-UniRule"/>
</dbReference>
<dbReference type="GO" id="GO:0006420">
    <property type="term" value="P:arginyl-tRNA aminoacylation"/>
    <property type="evidence" value="ECO:0007669"/>
    <property type="project" value="UniProtKB-UniRule"/>
</dbReference>
<dbReference type="CDD" id="cd07956">
    <property type="entry name" value="Anticodon_Ia_Arg"/>
    <property type="match status" value="1"/>
</dbReference>
<dbReference type="CDD" id="cd00671">
    <property type="entry name" value="ArgRS_core"/>
    <property type="match status" value="1"/>
</dbReference>
<dbReference type="FunFam" id="1.10.730.10:FF:000008">
    <property type="entry name" value="Arginine--tRNA ligase"/>
    <property type="match status" value="1"/>
</dbReference>
<dbReference type="FunFam" id="3.40.50.620:FF:000062">
    <property type="entry name" value="Arginine--tRNA ligase"/>
    <property type="match status" value="1"/>
</dbReference>
<dbReference type="Gene3D" id="3.30.1360.70">
    <property type="entry name" value="Arginyl tRNA synthetase N-terminal domain"/>
    <property type="match status" value="1"/>
</dbReference>
<dbReference type="Gene3D" id="3.40.50.620">
    <property type="entry name" value="HUPs"/>
    <property type="match status" value="1"/>
</dbReference>
<dbReference type="Gene3D" id="1.10.730.10">
    <property type="entry name" value="Isoleucyl-tRNA Synthetase, Domain 1"/>
    <property type="match status" value="1"/>
</dbReference>
<dbReference type="HAMAP" id="MF_00123">
    <property type="entry name" value="Arg_tRNA_synth"/>
    <property type="match status" value="1"/>
</dbReference>
<dbReference type="InterPro" id="IPR001412">
    <property type="entry name" value="aa-tRNA-synth_I_CS"/>
</dbReference>
<dbReference type="InterPro" id="IPR001278">
    <property type="entry name" value="Arg-tRNA-ligase"/>
</dbReference>
<dbReference type="InterPro" id="IPR005148">
    <property type="entry name" value="Arg-tRNA-synth_N"/>
</dbReference>
<dbReference type="InterPro" id="IPR036695">
    <property type="entry name" value="Arg-tRNA-synth_N_sf"/>
</dbReference>
<dbReference type="InterPro" id="IPR035684">
    <property type="entry name" value="ArgRS_core"/>
</dbReference>
<dbReference type="InterPro" id="IPR008909">
    <property type="entry name" value="DALR_anticod-bd"/>
</dbReference>
<dbReference type="InterPro" id="IPR014729">
    <property type="entry name" value="Rossmann-like_a/b/a_fold"/>
</dbReference>
<dbReference type="InterPro" id="IPR009080">
    <property type="entry name" value="tRNAsynth_Ia_anticodon-bd"/>
</dbReference>
<dbReference type="NCBIfam" id="TIGR00456">
    <property type="entry name" value="argS"/>
    <property type="match status" value="1"/>
</dbReference>
<dbReference type="PANTHER" id="PTHR11956:SF5">
    <property type="entry name" value="ARGININE--TRNA LIGASE, CYTOPLASMIC"/>
    <property type="match status" value="1"/>
</dbReference>
<dbReference type="PANTHER" id="PTHR11956">
    <property type="entry name" value="ARGINYL-TRNA SYNTHETASE"/>
    <property type="match status" value="1"/>
</dbReference>
<dbReference type="Pfam" id="PF03485">
    <property type="entry name" value="Arg_tRNA_synt_N"/>
    <property type="match status" value="1"/>
</dbReference>
<dbReference type="Pfam" id="PF05746">
    <property type="entry name" value="DALR_1"/>
    <property type="match status" value="1"/>
</dbReference>
<dbReference type="Pfam" id="PF00750">
    <property type="entry name" value="tRNA-synt_1d"/>
    <property type="match status" value="1"/>
</dbReference>
<dbReference type="PRINTS" id="PR01038">
    <property type="entry name" value="TRNASYNTHARG"/>
</dbReference>
<dbReference type="SMART" id="SM01016">
    <property type="entry name" value="Arg_tRNA_synt_N"/>
    <property type="match status" value="1"/>
</dbReference>
<dbReference type="SMART" id="SM00836">
    <property type="entry name" value="DALR_1"/>
    <property type="match status" value="1"/>
</dbReference>
<dbReference type="SUPFAM" id="SSF47323">
    <property type="entry name" value="Anticodon-binding domain of a subclass of class I aminoacyl-tRNA synthetases"/>
    <property type="match status" value="1"/>
</dbReference>
<dbReference type="SUPFAM" id="SSF55190">
    <property type="entry name" value="Arginyl-tRNA synthetase (ArgRS), N-terminal 'additional' domain"/>
    <property type="match status" value="1"/>
</dbReference>
<dbReference type="SUPFAM" id="SSF52374">
    <property type="entry name" value="Nucleotidylyl transferase"/>
    <property type="match status" value="1"/>
</dbReference>
<dbReference type="PROSITE" id="PS00178">
    <property type="entry name" value="AA_TRNA_LIGASE_I"/>
    <property type="match status" value="1"/>
</dbReference>
<name>SYR_ALBFT</name>
<keyword id="KW-0030">Aminoacyl-tRNA synthetase</keyword>
<keyword id="KW-0067">ATP-binding</keyword>
<keyword id="KW-0963">Cytoplasm</keyword>
<keyword id="KW-0436">Ligase</keyword>
<keyword id="KW-0547">Nucleotide-binding</keyword>
<keyword id="KW-0648">Protein biosynthesis</keyword>
<keyword id="KW-1185">Reference proteome</keyword>
<proteinExistence type="inferred from homology"/>
<reference key="1">
    <citation type="submission" date="2006-02" db="EMBL/GenBank/DDBJ databases">
        <title>Complete sequence of chromosome of Rhodoferax ferrireducens DSM 15236.</title>
        <authorList>
            <person name="Copeland A."/>
            <person name="Lucas S."/>
            <person name="Lapidus A."/>
            <person name="Barry K."/>
            <person name="Detter J.C."/>
            <person name="Glavina del Rio T."/>
            <person name="Hammon N."/>
            <person name="Israni S."/>
            <person name="Pitluck S."/>
            <person name="Brettin T."/>
            <person name="Bruce D."/>
            <person name="Han C."/>
            <person name="Tapia R."/>
            <person name="Gilna P."/>
            <person name="Kiss H."/>
            <person name="Schmutz J."/>
            <person name="Larimer F."/>
            <person name="Land M."/>
            <person name="Kyrpides N."/>
            <person name="Ivanova N."/>
            <person name="Richardson P."/>
        </authorList>
    </citation>
    <scope>NUCLEOTIDE SEQUENCE [LARGE SCALE GENOMIC DNA]</scope>
    <source>
        <strain>ATCC BAA-621 / DSM 15236 / T118</strain>
    </source>
</reference>
<sequence>MLSVKIELLEALHQALEKLSPGAGSKAVFESPKVAAHGDLATTAAMQLAKPLKLNPRQLAENLRAELLVRAPFERWVEAIDIAGPGFINIKLKPEAKQQTVREVLSQGQQFGSQPGTGKRMLVEFVSANPTGPLHVGHGRQAALGDAICNLYQTQGWAVYREFYYNDAGVQIGTLASSTQLRARGFKPGDPEWPSGENAAAYNGDYIADIAADYLAKKTVHSDDRAFTASGDVEALDDIRLFAVAYLRHEQDLDLKAFAVHFDNYYLESSLYLSGKVDDVVKRLHDAGKTYEHDGALWLKSTEYGDDKDRVMRKGDGSYTYFVPDVAYHISKWERGFEKVVNIQGTDHHGTIARVRAGLQAANVGIPKGYPDYVLHTMVRVVRGGEEVKISKRAGSYVTLRDLIEWTSKDAVRFFLLSRKPDTEYTFDVDLAVAKNNDNPVYYVQYAHARICSVLAAWREKEGGDVASLGQADLSPLQSPQALALLLLLAKYPEMLTAAAAGFAPHDVTFYLRELAACYHSYYDAERILVDDDLIKRARLALVAATAQVLHNGLAVLGVSAPQKM</sequence>
<organism>
    <name type="scientific">Albidiferax ferrireducens (strain ATCC BAA-621 / DSM 15236 / T118)</name>
    <name type="common">Rhodoferax ferrireducens</name>
    <dbReference type="NCBI Taxonomy" id="338969"/>
    <lineage>
        <taxon>Bacteria</taxon>
        <taxon>Pseudomonadati</taxon>
        <taxon>Pseudomonadota</taxon>
        <taxon>Betaproteobacteria</taxon>
        <taxon>Burkholderiales</taxon>
        <taxon>Comamonadaceae</taxon>
        <taxon>Rhodoferax</taxon>
    </lineage>
</organism>